<protein>
    <recommendedName>
        <fullName evidence="1">Signal recognition particle 19 kDa protein</fullName>
        <shortName evidence="1">SRP19</shortName>
    </recommendedName>
</protein>
<proteinExistence type="inferred from homology"/>
<dbReference type="EMBL" id="CP001365">
    <property type="protein sequence ID" value="ACM56319.1"/>
    <property type="molecule type" value="Genomic_DNA"/>
</dbReference>
<dbReference type="RefSeq" id="WP_012659949.1">
    <property type="nucleotide sequence ID" value="NC_012029.1"/>
</dbReference>
<dbReference type="SMR" id="B9LUG2"/>
<dbReference type="GeneID" id="7400190"/>
<dbReference type="KEGG" id="hla:Hlac_0717"/>
<dbReference type="eggNOG" id="arCOG01217">
    <property type="taxonomic scope" value="Archaea"/>
</dbReference>
<dbReference type="HOGENOM" id="CLU_169299_1_0_2"/>
<dbReference type="Proteomes" id="UP000000740">
    <property type="component" value="Chromosome 1"/>
</dbReference>
<dbReference type="GO" id="GO:0048500">
    <property type="term" value="C:signal recognition particle"/>
    <property type="evidence" value="ECO:0007669"/>
    <property type="project" value="UniProtKB-UniRule"/>
</dbReference>
<dbReference type="GO" id="GO:0008312">
    <property type="term" value="F:7S RNA binding"/>
    <property type="evidence" value="ECO:0007669"/>
    <property type="project" value="UniProtKB-UniRule"/>
</dbReference>
<dbReference type="GO" id="GO:0006617">
    <property type="term" value="P:SRP-dependent cotranslational protein targeting to membrane, signal sequence recognition"/>
    <property type="evidence" value="ECO:0007669"/>
    <property type="project" value="TreeGrafter"/>
</dbReference>
<dbReference type="Gene3D" id="3.30.56.30">
    <property type="entry name" value="Signal recognition particle, SRP19-like subunit"/>
    <property type="match status" value="1"/>
</dbReference>
<dbReference type="HAMAP" id="MF_00305">
    <property type="entry name" value="SRP19"/>
    <property type="match status" value="1"/>
</dbReference>
<dbReference type="InterPro" id="IPR002778">
    <property type="entry name" value="Signal_recog_particle_SRP19"/>
</dbReference>
<dbReference type="InterPro" id="IPR053394">
    <property type="entry name" value="SRP19"/>
</dbReference>
<dbReference type="InterPro" id="IPR036521">
    <property type="entry name" value="SRP19-like_sf"/>
</dbReference>
<dbReference type="InterPro" id="IPR022938">
    <property type="entry name" value="SRP19_arc-type"/>
</dbReference>
<dbReference type="NCBIfam" id="NF041311">
    <property type="entry name" value="Sig_rec_Srp19_Halo"/>
    <property type="match status" value="1"/>
</dbReference>
<dbReference type="PANTHER" id="PTHR17453">
    <property type="entry name" value="SIGNAL RECOGNITION PARTICLE 19 KD PROTEIN"/>
    <property type="match status" value="1"/>
</dbReference>
<dbReference type="PANTHER" id="PTHR17453:SF0">
    <property type="entry name" value="SIGNAL RECOGNITION PARTICLE 19 KDA PROTEIN"/>
    <property type="match status" value="1"/>
</dbReference>
<dbReference type="Pfam" id="PF01922">
    <property type="entry name" value="SRP19"/>
    <property type="match status" value="1"/>
</dbReference>
<dbReference type="SUPFAM" id="SSF69695">
    <property type="entry name" value="SRP19"/>
    <property type="match status" value="1"/>
</dbReference>
<organism>
    <name type="scientific">Halorubrum lacusprofundi (strain ATCC 49239 / DSM 5036 / JCM 8891 / ACAM 34)</name>
    <dbReference type="NCBI Taxonomy" id="416348"/>
    <lineage>
        <taxon>Archaea</taxon>
        <taxon>Methanobacteriati</taxon>
        <taxon>Methanobacteriota</taxon>
        <taxon>Stenosarchaea group</taxon>
        <taxon>Halobacteria</taxon>
        <taxon>Halobacteriales</taxon>
        <taxon>Haloferacaceae</taxon>
        <taxon>Halorubrum</taxon>
    </lineage>
</organism>
<reference key="1">
    <citation type="journal article" date="2016" name="Stand. Genomic Sci.">
        <title>Complete genome sequence of the Antarctic Halorubrum lacusprofundi type strain ACAM 34.</title>
        <authorList>
            <person name="Anderson I.J."/>
            <person name="DasSarma P."/>
            <person name="Lucas S."/>
            <person name="Copeland A."/>
            <person name="Lapidus A."/>
            <person name="Del Rio T.G."/>
            <person name="Tice H."/>
            <person name="Dalin E."/>
            <person name="Bruce D.C."/>
            <person name="Goodwin L."/>
            <person name="Pitluck S."/>
            <person name="Sims D."/>
            <person name="Brettin T.S."/>
            <person name="Detter J.C."/>
            <person name="Han C.S."/>
            <person name="Larimer F."/>
            <person name="Hauser L."/>
            <person name="Land M."/>
            <person name="Ivanova N."/>
            <person name="Richardson P."/>
            <person name="Cavicchioli R."/>
            <person name="DasSarma S."/>
            <person name="Woese C.R."/>
            <person name="Kyrpides N.C."/>
        </authorList>
    </citation>
    <scope>NUCLEOTIDE SEQUENCE [LARGE SCALE GENOMIC DNA]</scope>
    <source>
        <strain>ATCC 49239 / DSM 5036 / JCM 8891 / ACAM 34</strain>
    </source>
</reference>
<comment type="function">
    <text evidence="1">Involved in targeting and insertion of nascent membrane proteins into the cytoplasmic membrane. Binds directly to 7S RNA and mediates binding of the 54 kDa subunit of the SRP.</text>
</comment>
<comment type="subunit">
    <text evidence="1">Part of the signal recognition particle protein translocation system, which is composed of SRP and FtsY. Archaeal SRP consists of a 7S RNA molecule of 300 nucleotides and two protein subunits: SRP54 and SRP19.</text>
</comment>
<comment type="subcellular location">
    <subcellularLocation>
        <location evidence="1">Cytoplasm</location>
    </subcellularLocation>
</comment>
<comment type="similarity">
    <text evidence="1">Belongs to the SRP19 family.</text>
</comment>
<sequence>MVENVVYPAYFDADRSRSEGRRVPMDLAIEEPTVDEIAKAVQQVGYDAVIEREKTYSREFKPRGAVVVRGTEDTAKNDLVQAIAAYLGVIRE</sequence>
<evidence type="ECO:0000255" key="1">
    <source>
        <dbReference type="HAMAP-Rule" id="MF_00305"/>
    </source>
</evidence>
<accession>B9LUG2</accession>
<gene>
    <name evidence="1" type="primary">srp19</name>
    <name type="ordered locus">Hlac_0717</name>
</gene>
<name>SRP19_HALLT</name>
<keyword id="KW-0963">Cytoplasm</keyword>
<keyword id="KW-1185">Reference proteome</keyword>
<keyword id="KW-0687">Ribonucleoprotein</keyword>
<keyword id="KW-0694">RNA-binding</keyword>
<keyword id="KW-0733">Signal recognition particle</keyword>
<feature type="chain" id="PRO_1000196543" description="Signal recognition particle 19 kDa protein">
    <location>
        <begin position="1"/>
        <end position="92"/>
    </location>
</feature>